<comment type="catalytic activity">
    <reaction evidence="1">
        <text>CMP + ATP = CDP + ADP</text>
        <dbReference type="Rhea" id="RHEA:11600"/>
        <dbReference type="ChEBI" id="CHEBI:30616"/>
        <dbReference type="ChEBI" id="CHEBI:58069"/>
        <dbReference type="ChEBI" id="CHEBI:60377"/>
        <dbReference type="ChEBI" id="CHEBI:456216"/>
        <dbReference type="EC" id="2.7.4.25"/>
    </reaction>
</comment>
<comment type="catalytic activity">
    <reaction evidence="1">
        <text>dCMP + ATP = dCDP + ADP</text>
        <dbReference type="Rhea" id="RHEA:25094"/>
        <dbReference type="ChEBI" id="CHEBI:30616"/>
        <dbReference type="ChEBI" id="CHEBI:57566"/>
        <dbReference type="ChEBI" id="CHEBI:58593"/>
        <dbReference type="ChEBI" id="CHEBI:456216"/>
        <dbReference type="EC" id="2.7.4.25"/>
    </reaction>
</comment>
<comment type="subcellular location">
    <subcellularLocation>
        <location evidence="1">Cytoplasm</location>
    </subcellularLocation>
</comment>
<comment type="similarity">
    <text evidence="1">Belongs to the cytidylate kinase family. Type 1 subfamily.</text>
</comment>
<gene>
    <name evidence="1" type="primary">cmk</name>
    <name type="ordered locus">Bsph_1917</name>
</gene>
<evidence type="ECO:0000255" key="1">
    <source>
        <dbReference type="HAMAP-Rule" id="MF_00238"/>
    </source>
</evidence>
<sequence length="224" mass="24446">MKKNIQIAIDGPAGAGKSTIAKIVAEALDFTYIDTGAMYRAVTYKAMQQNIHLDDEAKLAEMLAASTIDLKPSPQGQLVFLDGHNVSADIRSNEVTSSVSQVAAHAKVRELLVAQQQKLAANGGVVMDGRDIATHVLKNAELKIFMSATVEERARRRFIDNQKRGIDSSLEKLQEEIALRDKKDSEREASPLIQAEDAIFLDTTALSIDDAAQAILKLAEEKML</sequence>
<protein>
    <recommendedName>
        <fullName evidence="1">Cytidylate kinase</fullName>
        <shortName evidence="1">CK</shortName>
        <ecNumber evidence="1">2.7.4.25</ecNumber>
    </recommendedName>
    <alternativeName>
        <fullName evidence="1">Cytidine monophosphate kinase</fullName>
        <shortName evidence="1">CMP kinase</shortName>
    </alternativeName>
</protein>
<proteinExistence type="inferred from homology"/>
<accession>B1HT93</accession>
<name>KCY_LYSSC</name>
<keyword id="KW-0067">ATP-binding</keyword>
<keyword id="KW-0963">Cytoplasm</keyword>
<keyword id="KW-0418">Kinase</keyword>
<keyword id="KW-0547">Nucleotide-binding</keyword>
<keyword id="KW-0808">Transferase</keyword>
<reference key="1">
    <citation type="journal article" date="2008" name="J. Bacteriol.">
        <title>Complete genome sequence of the mosquitocidal bacterium Bacillus sphaericus C3-41 and comparison with those of closely related Bacillus species.</title>
        <authorList>
            <person name="Hu X."/>
            <person name="Fan W."/>
            <person name="Han B."/>
            <person name="Liu H."/>
            <person name="Zheng D."/>
            <person name="Li Q."/>
            <person name="Dong W."/>
            <person name="Yan J."/>
            <person name="Gao M."/>
            <person name="Berry C."/>
            <person name="Yuan Z."/>
        </authorList>
    </citation>
    <scope>NUCLEOTIDE SEQUENCE [LARGE SCALE GENOMIC DNA]</scope>
    <source>
        <strain>C3-41</strain>
    </source>
</reference>
<dbReference type="EC" id="2.7.4.25" evidence="1"/>
<dbReference type="EMBL" id="CP000817">
    <property type="protein sequence ID" value="ACA39509.1"/>
    <property type="molecule type" value="Genomic_DNA"/>
</dbReference>
<dbReference type="RefSeq" id="WP_012293605.1">
    <property type="nucleotide sequence ID" value="NC_010382.1"/>
</dbReference>
<dbReference type="SMR" id="B1HT93"/>
<dbReference type="EnsemblBacteria" id="ACA39509">
    <property type="protein sequence ID" value="ACA39509"/>
    <property type="gene ID" value="Bsph_1917"/>
</dbReference>
<dbReference type="KEGG" id="lsp:Bsph_1917"/>
<dbReference type="HOGENOM" id="CLU_079959_0_2_9"/>
<dbReference type="Proteomes" id="UP000002164">
    <property type="component" value="Chromosome"/>
</dbReference>
<dbReference type="GO" id="GO:0005829">
    <property type="term" value="C:cytosol"/>
    <property type="evidence" value="ECO:0007669"/>
    <property type="project" value="TreeGrafter"/>
</dbReference>
<dbReference type="GO" id="GO:0005524">
    <property type="term" value="F:ATP binding"/>
    <property type="evidence" value="ECO:0007669"/>
    <property type="project" value="UniProtKB-UniRule"/>
</dbReference>
<dbReference type="GO" id="GO:0036430">
    <property type="term" value="F:CMP kinase activity"/>
    <property type="evidence" value="ECO:0007669"/>
    <property type="project" value="RHEA"/>
</dbReference>
<dbReference type="GO" id="GO:0036431">
    <property type="term" value="F:dCMP kinase activity"/>
    <property type="evidence" value="ECO:0007669"/>
    <property type="project" value="RHEA"/>
</dbReference>
<dbReference type="GO" id="GO:0015949">
    <property type="term" value="P:nucleobase-containing small molecule interconversion"/>
    <property type="evidence" value="ECO:0007669"/>
    <property type="project" value="TreeGrafter"/>
</dbReference>
<dbReference type="GO" id="GO:0006220">
    <property type="term" value="P:pyrimidine nucleotide metabolic process"/>
    <property type="evidence" value="ECO:0007669"/>
    <property type="project" value="UniProtKB-UniRule"/>
</dbReference>
<dbReference type="CDD" id="cd02020">
    <property type="entry name" value="CMPK"/>
    <property type="match status" value="1"/>
</dbReference>
<dbReference type="Gene3D" id="3.40.50.300">
    <property type="entry name" value="P-loop containing nucleotide triphosphate hydrolases"/>
    <property type="match status" value="1"/>
</dbReference>
<dbReference type="HAMAP" id="MF_00238">
    <property type="entry name" value="Cytidyl_kinase_type1"/>
    <property type="match status" value="1"/>
</dbReference>
<dbReference type="InterPro" id="IPR003136">
    <property type="entry name" value="Cytidylate_kin"/>
</dbReference>
<dbReference type="InterPro" id="IPR011994">
    <property type="entry name" value="Cytidylate_kinase_dom"/>
</dbReference>
<dbReference type="InterPro" id="IPR027417">
    <property type="entry name" value="P-loop_NTPase"/>
</dbReference>
<dbReference type="NCBIfam" id="TIGR00017">
    <property type="entry name" value="cmk"/>
    <property type="match status" value="1"/>
</dbReference>
<dbReference type="PANTHER" id="PTHR21299:SF2">
    <property type="entry name" value="CYTIDYLATE KINASE"/>
    <property type="match status" value="1"/>
</dbReference>
<dbReference type="PANTHER" id="PTHR21299">
    <property type="entry name" value="CYTIDYLATE KINASE/PANTOATE-BETA-ALANINE LIGASE"/>
    <property type="match status" value="1"/>
</dbReference>
<dbReference type="Pfam" id="PF02224">
    <property type="entry name" value="Cytidylate_kin"/>
    <property type="match status" value="1"/>
</dbReference>
<dbReference type="SUPFAM" id="SSF52540">
    <property type="entry name" value="P-loop containing nucleoside triphosphate hydrolases"/>
    <property type="match status" value="1"/>
</dbReference>
<organism>
    <name type="scientific">Lysinibacillus sphaericus (strain C3-41)</name>
    <dbReference type="NCBI Taxonomy" id="444177"/>
    <lineage>
        <taxon>Bacteria</taxon>
        <taxon>Bacillati</taxon>
        <taxon>Bacillota</taxon>
        <taxon>Bacilli</taxon>
        <taxon>Bacillales</taxon>
        <taxon>Bacillaceae</taxon>
        <taxon>Lysinibacillus</taxon>
    </lineage>
</organism>
<feature type="chain" id="PRO_1000100667" description="Cytidylate kinase">
    <location>
        <begin position="1"/>
        <end position="224"/>
    </location>
</feature>
<feature type="binding site" evidence="1">
    <location>
        <begin position="11"/>
        <end position="19"/>
    </location>
    <ligand>
        <name>ATP</name>
        <dbReference type="ChEBI" id="CHEBI:30616"/>
    </ligand>
</feature>